<sequence>RRRRSQGSEVNLTGQGQPCHSCGERCPGFLAHKWRKICQHCQCPWEEHGHTASNQDLERSLCRLVSGSQRDSLCDSSSDSSVEKYAWVPSGLNPVQVHHFFKCFPEKKIPYINSPGEKYRLKQLLHQLPPHDSEARYCCSLQGEEEEELLLLFSQKRRLENLGRGCVRPISGTMSGTVCQQCGHQINVGEVAVFASRAGLGFCWHPQCFTCAQCLELLCDLIYFYQDGKVYCGRHHAELKRPRCLACDEVIFSLECTQAEGFHWHTRHFCCFECECPLGGQRYIMKDQRPFCCSCYERLYAQYCDSCGECIGIDEGQLTYGGQHWHASESCFCCGRCGECLLGRPFLPRHGQIYCSRSCSMLHTKSERPFSPSQMDLSFQKETKDVGTSTNHELEGDSITNCTLAGSRTSLSVIDQTPTQAAPARSLHSSLRGAPKGFSRECPNRRSLPDLSSHTRTPTRVTFQLPSHSEIKESISFSRPSFTSSSSSDEEEGYFLGEPIPLPPFLRSPGYTAPPTHVPTSTRKQKKKKDKSCFLS</sequence>
<accession>A0A1L8F1M4</accession>
<evidence type="ECO:0000250" key="1">
    <source>
        <dbReference type="UniProtKB" id="A8WH69"/>
    </source>
</evidence>
<evidence type="ECO:0000250" key="2">
    <source>
        <dbReference type="UniProtKB" id="O43900"/>
    </source>
</evidence>
<evidence type="ECO:0000255" key="3">
    <source>
        <dbReference type="PROSITE-ProRule" id="PRU00125"/>
    </source>
</evidence>
<evidence type="ECO:0000255" key="4">
    <source>
        <dbReference type="PROSITE-ProRule" id="PRU00636"/>
    </source>
</evidence>
<evidence type="ECO:0000256" key="5">
    <source>
        <dbReference type="SAM" id="MobiDB-lite"/>
    </source>
</evidence>
<evidence type="ECO:0000303" key="6">
    <source>
    </source>
</evidence>
<evidence type="ECO:0000305" key="7"/>
<evidence type="ECO:0000312" key="8">
    <source>
        <dbReference type="Proteomes" id="UP000186698"/>
    </source>
</evidence>
<keyword id="KW-1003">Cell membrane</keyword>
<keyword id="KW-0970">Cilium biogenesis/degradation</keyword>
<keyword id="KW-0963">Cytoplasm</keyword>
<keyword id="KW-0217">Developmental protein</keyword>
<keyword id="KW-0440">LIM domain</keyword>
<keyword id="KW-0472">Membrane</keyword>
<keyword id="KW-0479">Metal-binding</keyword>
<keyword id="KW-0496">Mitochondrion</keyword>
<keyword id="KW-1185">Reference proteome</keyword>
<keyword id="KW-0677">Repeat</keyword>
<keyword id="KW-0862">Zinc</keyword>
<feature type="chain" id="PRO_0000442109" description="Prickle planar cell polarity protein 3-B">
    <location>
        <begin position="1" status="less than"/>
        <end position="536"/>
    </location>
</feature>
<feature type="domain" description="PET" evidence="4">
    <location>
        <begin position="66"/>
        <end position="175"/>
    </location>
</feature>
<feature type="domain" description="LIM zinc-binding 1" evidence="3">
    <location>
        <begin position="177"/>
        <end position="241"/>
    </location>
</feature>
<feature type="domain" description="LIM zinc-binding 2" evidence="3">
    <location>
        <begin position="242"/>
        <end position="302"/>
    </location>
</feature>
<feature type="domain" description="LIM zinc-binding 3" evidence="3">
    <location>
        <begin position="305"/>
        <end position="366"/>
    </location>
</feature>
<feature type="region of interest" description="Disordered" evidence="5">
    <location>
        <begin position="418"/>
        <end position="536"/>
    </location>
</feature>
<feature type="compositionally biased region" description="Basic and acidic residues" evidence="5">
    <location>
        <begin position="438"/>
        <end position="448"/>
    </location>
</feature>
<feature type="compositionally biased region" description="Polar residues" evidence="5">
    <location>
        <begin position="450"/>
        <end position="467"/>
    </location>
</feature>
<feature type="compositionally biased region" description="Low complexity" evidence="5">
    <location>
        <begin position="474"/>
        <end position="487"/>
    </location>
</feature>
<feature type="non-terminal residue">
    <location>
        <position position="1"/>
    </location>
</feature>
<proteinExistence type="inferred from homology"/>
<protein>
    <recommendedName>
        <fullName evidence="2">Prickle planar cell polarity protein 3-B</fullName>
    </recommendedName>
    <alternativeName>
        <fullName>LIM domain only protein 6-B</fullName>
        <shortName evidence="1">LMO6-B</shortName>
    </alternativeName>
    <alternativeName>
        <fullName>Prickle-like protein 3-B</fullName>
        <shortName evidence="1">Pk3-B</shortName>
    </alternativeName>
</protein>
<dbReference type="EMBL" id="CM004481">
    <property type="protein sequence ID" value="OCT65482.1"/>
    <property type="molecule type" value="Genomic_DNA"/>
</dbReference>
<dbReference type="SMR" id="A0A1L8F1M4"/>
<dbReference type="STRING" id="8355.A0A1L8F1M4"/>
<dbReference type="PaxDb" id="8355-A0A1L8F1M4"/>
<dbReference type="OMA" id="CHLANNW"/>
<dbReference type="Proteomes" id="UP000186698">
    <property type="component" value="Unplaced"/>
</dbReference>
<dbReference type="Proteomes" id="UP000694892">
    <property type="component" value="Chromosome 8S"/>
</dbReference>
<dbReference type="GO" id="GO:0005739">
    <property type="term" value="C:mitochondrion"/>
    <property type="evidence" value="ECO:0007669"/>
    <property type="project" value="UniProtKB-SubCell"/>
</dbReference>
<dbReference type="GO" id="GO:0005886">
    <property type="term" value="C:plasma membrane"/>
    <property type="evidence" value="ECO:0007669"/>
    <property type="project" value="UniProtKB-SubCell"/>
</dbReference>
<dbReference type="GO" id="GO:0008270">
    <property type="term" value="F:zinc ion binding"/>
    <property type="evidence" value="ECO:0007669"/>
    <property type="project" value="InterPro"/>
</dbReference>
<dbReference type="GO" id="GO:0030030">
    <property type="term" value="P:cell projection organization"/>
    <property type="evidence" value="ECO:0007669"/>
    <property type="project" value="UniProtKB-KW"/>
</dbReference>
<dbReference type="CDD" id="cd09415">
    <property type="entry name" value="LIM1_Prickle"/>
    <property type="match status" value="1"/>
</dbReference>
<dbReference type="CDD" id="cd09418">
    <property type="entry name" value="LIM2_Prickle"/>
    <property type="match status" value="1"/>
</dbReference>
<dbReference type="CDD" id="cd09420">
    <property type="entry name" value="LIM3_Prickle"/>
    <property type="match status" value="1"/>
</dbReference>
<dbReference type="FunFam" id="2.10.110.10:FF:000035">
    <property type="entry name" value="prickle-like protein 2 isoform X1"/>
    <property type="match status" value="1"/>
</dbReference>
<dbReference type="FunFam" id="2.10.110.10:FF:000005">
    <property type="entry name" value="Testin isoform 1"/>
    <property type="match status" value="1"/>
</dbReference>
<dbReference type="Gene3D" id="2.10.110.10">
    <property type="entry name" value="Cysteine Rich Protein"/>
    <property type="match status" value="3"/>
</dbReference>
<dbReference type="InterPro" id="IPR033725">
    <property type="entry name" value="LIM1_prickle"/>
</dbReference>
<dbReference type="InterPro" id="IPR033726">
    <property type="entry name" value="LIM2_prickle"/>
</dbReference>
<dbReference type="InterPro" id="IPR033727">
    <property type="entry name" value="LIM3_prickle"/>
</dbReference>
<dbReference type="InterPro" id="IPR010442">
    <property type="entry name" value="PET_domain"/>
</dbReference>
<dbReference type="InterPro" id="IPR047120">
    <property type="entry name" value="Pk/Esn/Tes"/>
</dbReference>
<dbReference type="InterPro" id="IPR001781">
    <property type="entry name" value="Znf_LIM"/>
</dbReference>
<dbReference type="PANTHER" id="PTHR24211">
    <property type="entry name" value="LIM DOMAIN-CONTAINING PROTEIN"/>
    <property type="match status" value="1"/>
</dbReference>
<dbReference type="PANTHER" id="PTHR24211:SF19">
    <property type="entry name" value="PRICKLE PLANAR CELL POLARITY PROTEIN 3"/>
    <property type="match status" value="1"/>
</dbReference>
<dbReference type="Pfam" id="PF00412">
    <property type="entry name" value="LIM"/>
    <property type="match status" value="2"/>
</dbReference>
<dbReference type="Pfam" id="PF06297">
    <property type="entry name" value="PET"/>
    <property type="match status" value="1"/>
</dbReference>
<dbReference type="SMART" id="SM00132">
    <property type="entry name" value="LIM"/>
    <property type="match status" value="3"/>
</dbReference>
<dbReference type="SUPFAM" id="SSF57716">
    <property type="entry name" value="Glucocorticoid receptor-like (DNA-binding domain)"/>
    <property type="match status" value="2"/>
</dbReference>
<dbReference type="PROSITE" id="PS00478">
    <property type="entry name" value="LIM_DOMAIN_1"/>
    <property type="match status" value="2"/>
</dbReference>
<dbReference type="PROSITE" id="PS50023">
    <property type="entry name" value="LIM_DOMAIN_2"/>
    <property type="match status" value="3"/>
</dbReference>
<dbReference type="PROSITE" id="PS51303">
    <property type="entry name" value="PET"/>
    <property type="match status" value="1"/>
</dbReference>
<organism>
    <name type="scientific">Xenopus laevis</name>
    <name type="common">African clawed frog</name>
    <dbReference type="NCBI Taxonomy" id="8355"/>
    <lineage>
        <taxon>Eukaryota</taxon>
        <taxon>Metazoa</taxon>
        <taxon>Chordata</taxon>
        <taxon>Craniata</taxon>
        <taxon>Vertebrata</taxon>
        <taxon>Euteleostomi</taxon>
        <taxon>Amphibia</taxon>
        <taxon>Batrachia</taxon>
        <taxon>Anura</taxon>
        <taxon>Pipoidea</taxon>
        <taxon>Pipidae</taxon>
        <taxon>Xenopodinae</taxon>
        <taxon>Xenopus</taxon>
        <taxon>Xenopus</taxon>
    </lineage>
</organism>
<reference key="1">
    <citation type="journal article" date="2016" name="Nature">
        <title>Genome evolution in the allotetraploid frog Xenopus laevis.</title>
        <authorList>
            <person name="Session A.M."/>
            <person name="Uno Y."/>
            <person name="Kwon T."/>
            <person name="Chapman J.A."/>
            <person name="Toyoda A."/>
            <person name="Takahashi S."/>
            <person name="Fukui A."/>
            <person name="Hikosaka A."/>
            <person name="Suzuki A."/>
            <person name="Kondo M."/>
            <person name="van Heeringen S.J."/>
            <person name="Quigley I."/>
            <person name="Heinz S."/>
            <person name="Ogino H."/>
            <person name="Ochi H."/>
            <person name="Hellsten U."/>
            <person name="Lyons J.B."/>
            <person name="Simakov O."/>
            <person name="Putnam N."/>
            <person name="Stites J."/>
            <person name="Kuroki Y."/>
            <person name="Tanaka T."/>
            <person name="Michiue T."/>
            <person name="Watanabe M."/>
            <person name="Bogdanovic O."/>
            <person name="Lister R."/>
            <person name="Georgiou G."/>
            <person name="Paranjpe S.S."/>
            <person name="van Kruijsbergen I."/>
            <person name="Shu S."/>
            <person name="Carlson J."/>
            <person name="Kinoshita T."/>
            <person name="Ohta Y."/>
            <person name="Mawaribuchi S."/>
            <person name="Jenkins J."/>
            <person name="Grimwood J."/>
            <person name="Schmutz J."/>
            <person name="Mitros T."/>
            <person name="Mozaffari S.V."/>
            <person name="Suzuki Y."/>
            <person name="Haramoto Y."/>
            <person name="Yamamoto T.S."/>
            <person name="Takagi C."/>
            <person name="Heald R."/>
            <person name="Miller K."/>
            <person name="Haudenschild C."/>
            <person name="Kitzman J."/>
            <person name="Nakayama T."/>
            <person name="Izutsu Y."/>
            <person name="Robert J."/>
            <person name="Fortriede J."/>
            <person name="Burns K."/>
            <person name="Lotay V."/>
            <person name="Karimi K."/>
            <person name="Yasuoka Y."/>
            <person name="Dichmann D.S."/>
            <person name="Flajnik M.F."/>
            <person name="Houston D.W."/>
            <person name="Shendure J."/>
            <person name="DuPasquier L."/>
            <person name="Vize P.D."/>
            <person name="Zorn A.M."/>
            <person name="Ito M."/>
            <person name="Marcotte E.M."/>
            <person name="Wallingford J.B."/>
            <person name="Ito Y."/>
            <person name="Asashima M."/>
            <person name="Ueno N."/>
            <person name="Matsuda Y."/>
            <person name="Veenstra G.J."/>
            <person name="Fujiyama A."/>
            <person name="Harland R.M."/>
            <person name="Taira M."/>
            <person name="Rokhsar D.S."/>
        </authorList>
    </citation>
    <scope>NUCLEOTIDE SEQUENCE [LARGE SCALE GENOMIC DNA]</scope>
    <source>
        <strain evidence="8">J</strain>
    </source>
</reference>
<reference key="2">
    <citation type="journal article" date="2012" name="Curr. Top. Dev. Biol.">
        <title>Asymmetric protein localization in planar cell polarity: mechanisms, puzzles, and challenges.</title>
        <authorList>
            <person name="Peng Y."/>
            <person name="Axelrod J.D."/>
        </authorList>
    </citation>
    <scope>REVIEW</scope>
    <scope>FUNCTION</scope>
</reference>
<name>PRC3B_XENLA</name>
<gene>
    <name type="primary">prickle3-b</name>
</gene>
<comment type="function">
    <text evidence="1 2 6">Involved in the planar cell polarity (PCP) pathway that is essential for the polarization of epithelial cells during morphogenetic processes, including gastrulation and neurulation (By similarity). PCP is maintained by two molecular modules, the global and the core modules (PubMed:23140624). Proteins of the core module include the proteins Frizzled (Fz), Disheveled (Dsh), Van Gogh (Vang), Prickle (Pk), Flamingo (Fmi, Celsr) and Diego (Dgo) (PubMed:23140624). The core module proteins develop subcellular asymmetry, accumulating in two groups on opposite sides of epithelial cells (PubMed:23140624). Distinct proximal (Vang, Pk and Fmi) and distal (Fz, Dsh, Dgo and Fmi) complexes segregate to opposite sides of the cell, where they interact with the opposite complex in the neighboring cell at or near the adherents junctions (PubMed:23140624). Directional information to orient polarization with respect to the tissue axes is provided by the global module which involves Wnt proteins (PubMed:23140624). Involved in the organization of the basal body (By similarity). Involved in cilia growth and positioning (By similarity). Required for proper assembly, stability, and function of mitochondrial membrane ATP synthase (mitochondrial complex V) (By similarity).</text>
</comment>
<comment type="subunit">
    <text evidence="1">Interacts with vangl2 via its C-terminus (By similarity). The vangl2-dependent membrane recruitment of prickle3 is a prerequisite for its polarization (By similarity). Interacts with wtip. Wtip is involved in the recruitment of prickle3 to the basal body (By similarity).</text>
</comment>
<comment type="subcellular location">
    <subcellularLocation>
        <location evidence="1">Cytoplasm</location>
    </subcellularLocation>
    <subcellularLocation>
        <location evidence="1">Cell membrane</location>
        <topology evidence="1">Peripheral membrane protein</topology>
        <orientation evidence="1">Cytoplasmic side</orientation>
    </subcellularLocation>
    <subcellularLocation>
        <location evidence="2">Mitochondrion</location>
    </subcellularLocation>
    <text evidence="1">Recruited by vangl2 to anterior cell borders. This polarity is controlled by wnt proteins (By similarity). Wtip is involved in the recruitment of prickle3 to the basal body (By similarity).</text>
</comment>
<comment type="similarity">
    <text evidence="7">Belongs to the prickle / espinas / testin family.</text>
</comment>